<dbReference type="EMBL" id="DS028118">
    <property type="protein sequence ID" value="EEY57787.1"/>
    <property type="molecule type" value="Genomic_DNA"/>
</dbReference>
<dbReference type="RefSeq" id="XP_002908973.1">
    <property type="nucleotide sequence ID" value="XM_002908927.1"/>
</dbReference>
<dbReference type="SMR" id="D0MQL8"/>
<dbReference type="EnsemblProtists" id="PITG_00366T0">
    <property type="protein sequence ID" value="PITG_00366T0"/>
    <property type="gene ID" value="PITG_00366"/>
</dbReference>
<dbReference type="GeneID" id="9477186"/>
<dbReference type="KEGG" id="pif:PITG_00366"/>
<dbReference type="VEuPathDB" id="FungiDB:PITG_00366"/>
<dbReference type="eggNOG" id="ENOG502RGU6">
    <property type="taxonomic scope" value="Eukaryota"/>
</dbReference>
<dbReference type="HOGENOM" id="CLU_160339_0_0_1"/>
<dbReference type="InParanoid" id="D0MQL8"/>
<dbReference type="OMA" id="MRLAMIL"/>
<dbReference type="OrthoDB" id="10506866at2759"/>
<dbReference type="Proteomes" id="UP000006643">
    <property type="component" value="Partially assembled WGS sequence"/>
</dbReference>
<dbReference type="GO" id="GO:0005576">
    <property type="term" value="C:extracellular region"/>
    <property type="evidence" value="ECO:0007669"/>
    <property type="project" value="UniProtKB-SubCell"/>
</dbReference>
<dbReference type="GO" id="GO:0030430">
    <property type="term" value="C:host cell cytoplasm"/>
    <property type="evidence" value="ECO:0007669"/>
    <property type="project" value="UniProtKB-SubCell"/>
</dbReference>
<dbReference type="GO" id="GO:0042025">
    <property type="term" value="C:host cell nucleus"/>
    <property type="evidence" value="ECO:0007669"/>
    <property type="project" value="UniProtKB-SubCell"/>
</dbReference>
<organism>
    <name type="scientific">Phytophthora infestans (strain T30-4)</name>
    <name type="common">Potato late blight agent</name>
    <dbReference type="NCBI Taxonomy" id="403677"/>
    <lineage>
        <taxon>Eukaryota</taxon>
        <taxon>Sar</taxon>
        <taxon>Stramenopiles</taxon>
        <taxon>Oomycota</taxon>
        <taxon>Peronosporales</taxon>
        <taxon>Peronosporaceae</taxon>
        <taxon>Phytophthora</taxon>
    </lineage>
</organism>
<accession>D0MQL8</accession>
<comment type="function">
    <text evidence="6">Effector that enhances P.infestans colonization of Nicotiana benthamiana leaves.</text>
</comment>
<comment type="subcellular location">
    <subcellularLocation>
        <location evidence="6">Secreted</location>
    </subcellularLocation>
    <subcellularLocation>
        <location evidence="6">Host cytoplasm</location>
    </subcellularLocation>
    <subcellularLocation>
        <location evidence="6">Host nucleus</location>
    </subcellularLocation>
</comment>
<comment type="induction">
    <text evidence="2 3 4 5">Expression is induced during host plant infection.</text>
</comment>
<comment type="domain">
    <text evidence="9">The RxLR-dEER motif acts to carry the protein into the host cell cytoplasm through binding to cell surface phosphatidylinositol-3-phosphate.</text>
</comment>
<comment type="similarity">
    <text evidence="8">Belongs to the RxLR effector family.</text>
</comment>
<proteinExistence type="evidence at transcript level"/>
<evidence type="ECO:0000255" key="1"/>
<evidence type="ECO:0000269" key="2">
    <source>
    </source>
</evidence>
<evidence type="ECO:0000269" key="3">
    <source>
    </source>
</evidence>
<evidence type="ECO:0000269" key="4">
    <source>
    </source>
</evidence>
<evidence type="ECO:0000269" key="5">
    <source>
    </source>
</evidence>
<evidence type="ECO:0000269" key="6">
    <source>
    </source>
</evidence>
<evidence type="ECO:0000303" key="7">
    <source>
    </source>
</evidence>
<evidence type="ECO:0000305" key="8"/>
<evidence type="ECO:0000305" key="9">
    <source>
    </source>
</evidence>
<keyword id="KW-1035">Host cytoplasm</keyword>
<keyword id="KW-1048">Host nucleus</keyword>
<keyword id="KW-1185">Reference proteome</keyword>
<keyword id="KW-0964">Secreted</keyword>
<keyword id="KW-0732">Signal</keyword>
<keyword id="KW-0843">Virulence</keyword>
<reference key="1">
    <citation type="journal article" date="2009" name="Nature">
        <title>Genome sequence and analysis of the Irish potato famine pathogen Phytophthora infestans.</title>
        <authorList>
            <consortium name="The Broad Institute Genome Sequencing Platform"/>
            <person name="Haas B.J."/>
            <person name="Kamoun S."/>
            <person name="Zody M.C."/>
            <person name="Jiang R.H."/>
            <person name="Handsaker R.E."/>
            <person name="Cano L.M."/>
            <person name="Grabherr M."/>
            <person name="Kodira C.D."/>
            <person name="Raffaele S."/>
            <person name="Torto-Alalibo T."/>
            <person name="Bozkurt T.O."/>
            <person name="Ah-Fong A.M."/>
            <person name="Alvarado L."/>
            <person name="Anderson V.L."/>
            <person name="Armstrong M.R."/>
            <person name="Avrova A."/>
            <person name="Baxter L."/>
            <person name="Beynon J."/>
            <person name="Boevink P.C."/>
            <person name="Bollmann S.R."/>
            <person name="Bos J.I."/>
            <person name="Bulone V."/>
            <person name="Cai G."/>
            <person name="Cakir C."/>
            <person name="Carrington J.C."/>
            <person name="Chawner M."/>
            <person name="Conti L."/>
            <person name="Costanzo S."/>
            <person name="Ewan R."/>
            <person name="Fahlgren N."/>
            <person name="Fischbach M.A."/>
            <person name="Fugelstad J."/>
            <person name="Gilroy E.M."/>
            <person name="Gnerre S."/>
            <person name="Green P.J."/>
            <person name="Grenville-Briggs L.J."/>
            <person name="Griffith J."/>
            <person name="Grunwald N.J."/>
            <person name="Horn K."/>
            <person name="Horner N.R."/>
            <person name="Hu C.H."/>
            <person name="Huitema E."/>
            <person name="Jeong D.H."/>
            <person name="Jones A.M."/>
            <person name="Jones J.D."/>
            <person name="Jones R.W."/>
            <person name="Karlsson E.K."/>
            <person name="Kunjeti S.G."/>
            <person name="Lamour K."/>
            <person name="Liu Z."/>
            <person name="Ma L."/>
            <person name="Maclean D."/>
            <person name="Chibucos M.C."/>
            <person name="McDonald H."/>
            <person name="McWalters J."/>
            <person name="Meijer H.J."/>
            <person name="Morgan W."/>
            <person name="Morris P.F."/>
            <person name="Munro C.A."/>
            <person name="O'Neill K."/>
            <person name="Ospina-Giraldo M."/>
            <person name="Pinzon A."/>
            <person name="Pritchard L."/>
            <person name="Ramsahoye B."/>
            <person name="Ren Q."/>
            <person name="Restrepo S."/>
            <person name="Roy S."/>
            <person name="Sadanandom A."/>
            <person name="Savidor A."/>
            <person name="Schornack S."/>
            <person name="Schwartz D.C."/>
            <person name="Schumann U.D."/>
            <person name="Schwessinger B."/>
            <person name="Seyer L."/>
            <person name="Sharpe T."/>
            <person name="Silvar C."/>
            <person name="Song J."/>
            <person name="Studholme D.J."/>
            <person name="Sykes S."/>
            <person name="Thines M."/>
            <person name="van de Vondervoort P.J."/>
            <person name="Phuntumart V."/>
            <person name="Wawra S."/>
            <person name="Weide R."/>
            <person name="Win J."/>
            <person name="Young C."/>
            <person name="Zhou S."/>
            <person name="Fry W."/>
            <person name="Meyers B.C."/>
            <person name="van West P."/>
            <person name="Ristaino J."/>
            <person name="Govers F."/>
            <person name="Birch P.R."/>
            <person name="Whisson S.C."/>
            <person name="Judelson H.S."/>
            <person name="Nusbaum C."/>
        </authorList>
    </citation>
    <scope>NUCLEOTIDE SEQUENCE [LARGE SCALE GENOMIC DNA]</scope>
    <source>
        <strain>T30-4</strain>
    </source>
</reference>
<reference key="2">
    <citation type="journal article" date="2007" name="Nature">
        <title>A translocation signal for delivery of oomycete effector proteins into host plant cells.</title>
        <authorList>
            <person name="Whisson S.C."/>
            <person name="Boevink P.C."/>
            <person name="Moleleki L."/>
            <person name="Avrova A.O."/>
            <person name="Morales J.G."/>
            <person name="Gilroy E.M."/>
            <person name="Armstrong M.R."/>
            <person name="Grouffaud S."/>
            <person name="van West P."/>
            <person name="Chapman S."/>
            <person name="Hein I."/>
            <person name="Toth I.K."/>
            <person name="Pritchard L."/>
            <person name="Birch P.R."/>
        </authorList>
    </citation>
    <scope>INDUCTION</scope>
    <scope>DOMAIN</scope>
</reference>
<reference key="3">
    <citation type="journal article" date="2009" name="Plant Cell">
        <title>In planta expression screens of Phytophthora infestans RXLR effectors reveal diverse phenotypes, including activation of the Solanum bulbocastanum disease resistance protein Rpi-blb2.</title>
        <authorList>
            <person name="Oh S.K."/>
            <person name="Young C."/>
            <person name="Lee M."/>
            <person name="Oliva R."/>
            <person name="Bozkurt T.O."/>
            <person name="Cano L.M."/>
            <person name="Win J."/>
            <person name="Bos J.I."/>
            <person name="Liu H.Y."/>
            <person name="van Damme M."/>
            <person name="Morgan W."/>
            <person name="Choi D."/>
            <person name="Van der Vossen E.A."/>
            <person name="Vleeshouwers V.G."/>
            <person name="Kamoun S."/>
        </authorList>
    </citation>
    <scope>INDUCTION</scope>
</reference>
<reference key="4">
    <citation type="journal article" date="2017" name="BMC Genomics">
        <title>RNA-seq of life stages of the oomycete Phytophthora infestans reveals dynamic changes in metabolic, signal transduction, and pathogenesis genes and a major role for calcium signaling in development.</title>
        <authorList>
            <person name="Ah-Fong A.M."/>
            <person name="Kim K.S."/>
            <person name="Judelson H.S."/>
        </authorList>
    </citation>
    <scope>INDUCTION</scope>
</reference>
<reference key="5">
    <citation type="journal article" date="2017" name="Front. Plant Sci.">
        <title>Conserved RXLR effector genes of Phytophthora infestans expressed at the early stage of potato infection are suppressive to host defense.</title>
        <authorList>
            <person name="Yin J."/>
            <person name="Gu B."/>
            <person name="Huang G."/>
            <person name="Tian Y."/>
            <person name="Quan J."/>
            <person name="Lindqvist-Kreuze H."/>
            <person name="Shan W."/>
        </authorList>
    </citation>
    <scope>INDUCTION</scope>
</reference>
<reference key="6">
    <citation type="journal article" date="2019" name="J. Exp. Bot.">
        <title>Phytophthora infestans RXLR effectors act in concert at diverse subcellular locations to enhance host colonization.</title>
        <authorList>
            <person name="Wang S."/>
            <person name="McLellan H."/>
            <person name="Bukharova T."/>
            <person name="He Q."/>
            <person name="Murphy F."/>
            <person name="Shi J."/>
            <person name="Sun S."/>
            <person name="van Weymers P."/>
            <person name="Ren Y."/>
            <person name="Thilliez G."/>
            <person name="Wang H."/>
            <person name="Chen X."/>
            <person name="Engelhardt S."/>
            <person name="Vleeshouwers V."/>
            <person name="Gilroy E.M."/>
            <person name="Whisson S.C."/>
            <person name="Hein I."/>
            <person name="Wang X."/>
            <person name="Tian Z."/>
            <person name="Birch P.R.J."/>
            <person name="Boevink P.C."/>
        </authorList>
    </citation>
    <scope>FUNCTION</scope>
    <scope>SUBCELLULAR LOCATION</scope>
</reference>
<name>RD43_PHYIT</name>
<protein>
    <recommendedName>
        <fullName evidence="7">RxLR effector protein PexRD43</fullName>
    </recommendedName>
</protein>
<sequence length="129" mass="14340">MRLAMILLSIPLFVSGNVLHVPTQVTKSHAVSPDAQFVVAMGRRSLRTSGEANEERTRLNTLLLLDDVTEAEMSSIKKLALTFAKLENRNDGAADLFNMLRRQGHTKESARNAGNLYTKYLQNPSAFHT</sequence>
<gene>
    <name evidence="7" type="primary">PexRD43</name>
    <name type="ORF">PITG_00366</name>
</gene>
<feature type="signal peptide" evidence="1">
    <location>
        <begin position="1"/>
        <end position="16"/>
    </location>
</feature>
<feature type="chain" id="PRO_5003011285" description="RxLR effector protein PexRD43">
    <location>
        <begin position="17"/>
        <end position="129"/>
    </location>
</feature>
<feature type="short sequence motif" description="RxLR-dEER" evidence="9">
    <location>
        <begin position="44"/>
        <end position="56"/>
    </location>
</feature>